<name>PEN3H_PENVA</name>
<feature type="signal peptide" evidence="2">
    <location>
        <begin position="1"/>
        <end position="19"/>
    </location>
</feature>
<feature type="chain" id="PRO_0000023513" description="Penaeidin-3h">
    <location>
        <begin position="20"/>
        <end position="81"/>
    </location>
</feature>
<feature type="modified residue" description="Pyrrolidone carboxylic acid" evidence="1">
    <location>
        <position position="20"/>
    </location>
</feature>
<feature type="modified residue" description="Serine amide" evidence="1">
    <location>
        <position position="81"/>
    </location>
</feature>
<feature type="disulfide bond" evidence="1">
    <location>
        <begin position="55"/>
        <end position="73"/>
    </location>
</feature>
<feature type="disulfide bond" evidence="1">
    <location>
        <begin position="67"/>
        <end position="74"/>
    </location>
</feature>
<organism>
    <name type="scientific">Penaeus vannamei</name>
    <name type="common">Whiteleg shrimp</name>
    <name type="synonym">Litopenaeus vannamei</name>
    <dbReference type="NCBI Taxonomy" id="6689"/>
    <lineage>
        <taxon>Eukaryota</taxon>
        <taxon>Metazoa</taxon>
        <taxon>Ecdysozoa</taxon>
        <taxon>Arthropoda</taxon>
        <taxon>Crustacea</taxon>
        <taxon>Multicrustacea</taxon>
        <taxon>Malacostraca</taxon>
        <taxon>Eumalacostraca</taxon>
        <taxon>Eucarida</taxon>
        <taxon>Decapoda</taxon>
        <taxon>Dendrobranchiata</taxon>
        <taxon>Penaeoidea</taxon>
        <taxon>Penaeidae</taxon>
        <taxon>Penaeus</taxon>
    </lineage>
</organism>
<dbReference type="EMBL" id="AF390144">
    <property type="protein sequence ID" value="AAK77537.1"/>
    <property type="molecule type" value="mRNA"/>
</dbReference>
<dbReference type="SMR" id="Q963C6"/>
<dbReference type="GO" id="GO:0005737">
    <property type="term" value="C:cytoplasm"/>
    <property type="evidence" value="ECO:0007669"/>
    <property type="project" value="InterPro"/>
</dbReference>
<dbReference type="GO" id="GO:0008061">
    <property type="term" value="F:chitin binding"/>
    <property type="evidence" value="ECO:0007669"/>
    <property type="project" value="UniProtKB-KW"/>
</dbReference>
<dbReference type="GO" id="GO:0042742">
    <property type="term" value="P:defense response to bacterium"/>
    <property type="evidence" value="ECO:0007669"/>
    <property type="project" value="UniProtKB-KW"/>
</dbReference>
<dbReference type="GO" id="GO:0050832">
    <property type="term" value="P:defense response to fungus"/>
    <property type="evidence" value="ECO:0007669"/>
    <property type="project" value="UniProtKB-KW"/>
</dbReference>
<dbReference type="GO" id="GO:0031640">
    <property type="term" value="P:killing of cells of another organism"/>
    <property type="evidence" value="ECO:0007669"/>
    <property type="project" value="UniProtKB-KW"/>
</dbReference>
<dbReference type="InterPro" id="IPR009226">
    <property type="entry name" value="Penaeidin"/>
</dbReference>
<dbReference type="Pfam" id="PF05927">
    <property type="entry name" value="Penaeidin"/>
    <property type="match status" value="1"/>
</dbReference>
<keyword id="KW-0027">Amidation</keyword>
<keyword id="KW-0044">Antibiotic</keyword>
<keyword id="KW-0929">Antimicrobial</keyword>
<keyword id="KW-0147">Chitin-binding</keyword>
<keyword id="KW-1015">Disulfide bond</keyword>
<keyword id="KW-0295">Fungicide</keyword>
<keyword id="KW-0873">Pyrrolidone carboxylic acid</keyword>
<keyword id="KW-0732">Signal</keyword>
<proteinExistence type="inferred from homology"/>
<protein>
    <recommendedName>
        <fullName>Penaeidin-3h</fullName>
        <shortName>Pen-3h</shortName>
    </recommendedName>
</protein>
<comment type="function">
    <text evidence="1">Antibacterial and antifungal activity. Presents chitin-binding activity (By similarity).</text>
</comment>
<comment type="subcellular location">
    <subcellularLocation>
        <location>Cytoplasmic granule</location>
    </subcellularLocation>
    <text>Cytoplasmic granules of hemocytes and to a lesser extent in small granules of hemocytes.</text>
</comment>
<comment type="similarity">
    <text evidence="3">Belongs to the penaeidin family.</text>
</comment>
<reference key="1">
    <citation type="journal article" date="2002" name="Immunogenetics">
        <title>Diversity of the penaeidin antimicrobial peptides in two shrimp species.</title>
        <authorList>
            <person name="Cuthbertson B.J."/>
            <person name="Shepard E.F."/>
            <person name="Chapman R.W."/>
            <person name="Gross P.S."/>
        </authorList>
    </citation>
    <scope>NUCLEOTIDE SEQUENCE [MRNA]</scope>
    <source>
        <tissue>Hemocyte</tissue>
    </source>
</reference>
<sequence>MRLVVCLVFLASFALVCQGQVYKGGYTRPIPRPPPFVRPLPGGPIGPYNGCPISCRGISFSQARSYCSRLGRCCHVGKGYSG</sequence>
<evidence type="ECO:0000250" key="1"/>
<evidence type="ECO:0000255" key="2"/>
<evidence type="ECO:0000305" key="3"/>
<accession>Q963C6</accession>